<feature type="chain" id="PRO_0000403590" description="Flap endonuclease 1">
    <location>
        <begin position="1"/>
        <end position="395"/>
    </location>
</feature>
<feature type="region of interest" description="N-domain">
    <location>
        <begin position="1"/>
        <end position="104"/>
    </location>
</feature>
<feature type="region of interest" description="Disordered" evidence="2">
    <location>
        <begin position="94"/>
        <end position="124"/>
    </location>
</feature>
<feature type="region of interest" description="I-domain">
    <location>
        <begin position="122"/>
        <end position="253"/>
    </location>
</feature>
<feature type="region of interest" description="Interaction with PCNA" evidence="1">
    <location>
        <begin position="341"/>
        <end position="349"/>
    </location>
</feature>
<feature type="region of interest" description="Disordered" evidence="2">
    <location>
        <begin position="356"/>
        <end position="395"/>
    </location>
</feature>
<feature type="compositionally biased region" description="Basic and acidic residues" evidence="2">
    <location>
        <begin position="356"/>
        <end position="389"/>
    </location>
</feature>
<feature type="binding site" evidence="1">
    <location>
        <position position="34"/>
    </location>
    <ligand>
        <name>Mg(2+)</name>
        <dbReference type="ChEBI" id="CHEBI:18420"/>
        <label>1</label>
    </ligand>
</feature>
<feature type="binding site" evidence="1">
    <location>
        <position position="47"/>
    </location>
    <ligand>
        <name>DNA</name>
        <dbReference type="ChEBI" id="CHEBI:16991"/>
    </ligand>
</feature>
<feature type="binding site" evidence="1">
    <location>
        <position position="70"/>
    </location>
    <ligand>
        <name>DNA</name>
        <dbReference type="ChEBI" id="CHEBI:16991"/>
    </ligand>
</feature>
<feature type="binding site" evidence="1">
    <location>
        <position position="86"/>
    </location>
    <ligand>
        <name>Mg(2+)</name>
        <dbReference type="ChEBI" id="CHEBI:18420"/>
        <label>1</label>
    </ligand>
</feature>
<feature type="binding site" evidence="1">
    <location>
        <position position="158"/>
    </location>
    <ligand>
        <name>DNA</name>
        <dbReference type="ChEBI" id="CHEBI:16991"/>
    </ligand>
</feature>
<feature type="binding site" evidence="1">
    <location>
        <position position="158"/>
    </location>
    <ligand>
        <name>Mg(2+)</name>
        <dbReference type="ChEBI" id="CHEBI:18420"/>
        <label>1</label>
    </ligand>
</feature>
<feature type="binding site" evidence="1">
    <location>
        <position position="160"/>
    </location>
    <ligand>
        <name>Mg(2+)</name>
        <dbReference type="ChEBI" id="CHEBI:18420"/>
        <label>1</label>
    </ligand>
</feature>
<feature type="binding site" evidence="1">
    <location>
        <position position="179"/>
    </location>
    <ligand>
        <name>Mg(2+)</name>
        <dbReference type="ChEBI" id="CHEBI:18420"/>
        <label>2</label>
    </ligand>
</feature>
<feature type="binding site" evidence="1">
    <location>
        <position position="181"/>
    </location>
    <ligand>
        <name>Mg(2+)</name>
        <dbReference type="ChEBI" id="CHEBI:18420"/>
        <label>2</label>
    </ligand>
</feature>
<feature type="binding site" evidence="1">
    <location>
        <position position="231"/>
    </location>
    <ligand>
        <name>DNA</name>
        <dbReference type="ChEBI" id="CHEBI:16991"/>
    </ligand>
</feature>
<feature type="binding site" evidence="1">
    <location>
        <position position="233"/>
    </location>
    <ligand>
        <name>DNA</name>
        <dbReference type="ChEBI" id="CHEBI:16991"/>
    </ligand>
</feature>
<feature type="binding site" evidence="1">
    <location>
        <position position="233"/>
    </location>
    <ligand>
        <name>Mg(2+)</name>
        <dbReference type="ChEBI" id="CHEBI:18420"/>
        <label>2</label>
    </ligand>
</feature>
<evidence type="ECO:0000255" key="1">
    <source>
        <dbReference type="HAMAP-Rule" id="MF_03140"/>
    </source>
</evidence>
<evidence type="ECO:0000256" key="2">
    <source>
        <dbReference type="SAM" id="MobiDB-lite"/>
    </source>
</evidence>
<evidence type="ECO:0000305" key="3"/>
<dbReference type="EC" id="3.1.-.-" evidence="1"/>
<dbReference type="EMBL" id="DS995905">
    <property type="protein sequence ID" value="EEA19652.1"/>
    <property type="status" value="ALT_SEQ"/>
    <property type="molecule type" value="Genomic_DNA"/>
</dbReference>
<dbReference type="RefSeq" id="XP_002152589.1">
    <property type="nucleotide sequence ID" value="XM_002152553.1"/>
</dbReference>
<dbReference type="SMR" id="B6QT52"/>
<dbReference type="STRING" id="441960.B6QT52"/>
<dbReference type="HOGENOM" id="CLU_032444_1_1_1"/>
<dbReference type="OrthoDB" id="5627at28568"/>
<dbReference type="Proteomes" id="UP000001294">
    <property type="component" value="Unassembled WGS sequence"/>
</dbReference>
<dbReference type="GO" id="GO:0005739">
    <property type="term" value="C:mitochondrion"/>
    <property type="evidence" value="ECO:0007669"/>
    <property type="project" value="UniProtKB-SubCell"/>
</dbReference>
<dbReference type="GO" id="GO:0005730">
    <property type="term" value="C:nucleolus"/>
    <property type="evidence" value="ECO:0007669"/>
    <property type="project" value="UniProtKB-SubCell"/>
</dbReference>
<dbReference type="GO" id="GO:0005654">
    <property type="term" value="C:nucleoplasm"/>
    <property type="evidence" value="ECO:0007669"/>
    <property type="project" value="UniProtKB-SubCell"/>
</dbReference>
<dbReference type="GO" id="GO:0008409">
    <property type="term" value="F:5'-3' exonuclease activity"/>
    <property type="evidence" value="ECO:0007669"/>
    <property type="project" value="UniProtKB-UniRule"/>
</dbReference>
<dbReference type="GO" id="GO:0017108">
    <property type="term" value="F:5'-flap endonuclease activity"/>
    <property type="evidence" value="ECO:0007669"/>
    <property type="project" value="UniProtKB-UniRule"/>
</dbReference>
<dbReference type="GO" id="GO:0003677">
    <property type="term" value="F:DNA binding"/>
    <property type="evidence" value="ECO:0007669"/>
    <property type="project" value="UniProtKB-UniRule"/>
</dbReference>
<dbReference type="GO" id="GO:0000287">
    <property type="term" value="F:magnesium ion binding"/>
    <property type="evidence" value="ECO:0007669"/>
    <property type="project" value="UniProtKB-UniRule"/>
</dbReference>
<dbReference type="GO" id="GO:0006284">
    <property type="term" value="P:base-excision repair"/>
    <property type="evidence" value="ECO:0007669"/>
    <property type="project" value="UniProtKB-UniRule"/>
</dbReference>
<dbReference type="GO" id="GO:0043137">
    <property type="term" value="P:DNA replication, removal of RNA primer"/>
    <property type="evidence" value="ECO:0007669"/>
    <property type="project" value="UniProtKB-UniRule"/>
</dbReference>
<dbReference type="CDD" id="cd09907">
    <property type="entry name" value="H3TH_FEN1-Euk"/>
    <property type="match status" value="1"/>
</dbReference>
<dbReference type="CDD" id="cd09867">
    <property type="entry name" value="PIN_FEN1"/>
    <property type="match status" value="1"/>
</dbReference>
<dbReference type="FunFam" id="1.10.150.20:FF:000009">
    <property type="entry name" value="Flap endonuclease 1"/>
    <property type="match status" value="1"/>
</dbReference>
<dbReference type="FunFam" id="3.40.50.1010:FF:000003">
    <property type="entry name" value="Flap endonuclease 1"/>
    <property type="match status" value="1"/>
</dbReference>
<dbReference type="Gene3D" id="1.10.150.20">
    <property type="entry name" value="5' to 3' exonuclease, C-terminal subdomain"/>
    <property type="match status" value="1"/>
</dbReference>
<dbReference type="Gene3D" id="3.40.50.1010">
    <property type="entry name" value="5'-nuclease"/>
    <property type="match status" value="1"/>
</dbReference>
<dbReference type="HAMAP" id="MF_00614">
    <property type="entry name" value="Fen"/>
    <property type="match status" value="1"/>
</dbReference>
<dbReference type="InterPro" id="IPR036279">
    <property type="entry name" value="5-3_exonuclease_C_sf"/>
</dbReference>
<dbReference type="InterPro" id="IPR023426">
    <property type="entry name" value="Flap_endonuc"/>
</dbReference>
<dbReference type="InterPro" id="IPR008918">
    <property type="entry name" value="HhH2"/>
</dbReference>
<dbReference type="InterPro" id="IPR029060">
    <property type="entry name" value="PIN-like_dom_sf"/>
</dbReference>
<dbReference type="InterPro" id="IPR006086">
    <property type="entry name" value="XPG-I_dom"/>
</dbReference>
<dbReference type="InterPro" id="IPR006084">
    <property type="entry name" value="XPG/Rad2"/>
</dbReference>
<dbReference type="InterPro" id="IPR019974">
    <property type="entry name" value="XPG_CS"/>
</dbReference>
<dbReference type="InterPro" id="IPR006085">
    <property type="entry name" value="XPG_DNA_repair_N"/>
</dbReference>
<dbReference type="PANTHER" id="PTHR11081:SF9">
    <property type="entry name" value="FLAP ENDONUCLEASE 1"/>
    <property type="match status" value="1"/>
</dbReference>
<dbReference type="PANTHER" id="PTHR11081">
    <property type="entry name" value="FLAP ENDONUCLEASE FAMILY MEMBER"/>
    <property type="match status" value="1"/>
</dbReference>
<dbReference type="Pfam" id="PF00867">
    <property type="entry name" value="XPG_I"/>
    <property type="match status" value="1"/>
</dbReference>
<dbReference type="Pfam" id="PF00752">
    <property type="entry name" value="XPG_N"/>
    <property type="match status" value="1"/>
</dbReference>
<dbReference type="PRINTS" id="PR00853">
    <property type="entry name" value="XPGRADSUPER"/>
</dbReference>
<dbReference type="SMART" id="SM00279">
    <property type="entry name" value="HhH2"/>
    <property type="match status" value="1"/>
</dbReference>
<dbReference type="SMART" id="SM00484">
    <property type="entry name" value="XPGI"/>
    <property type="match status" value="1"/>
</dbReference>
<dbReference type="SMART" id="SM00485">
    <property type="entry name" value="XPGN"/>
    <property type="match status" value="1"/>
</dbReference>
<dbReference type="SUPFAM" id="SSF47807">
    <property type="entry name" value="5' to 3' exonuclease, C-terminal subdomain"/>
    <property type="match status" value="1"/>
</dbReference>
<dbReference type="SUPFAM" id="SSF88723">
    <property type="entry name" value="PIN domain-like"/>
    <property type="match status" value="1"/>
</dbReference>
<dbReference type="PROSITE" id="PS00841">
    <property type="entry name" value="XPG_1"/>
    <property type="match status" value="1"/>
</dbReference>
<dbReference type="PROSITE" id="PS00842">
    <property type="entry name" value="XPG_2"/>
    <property type="match status" value="1"/>
</dbReference>
<reference key="1">
    <citation type="journal article" date="2015" name="Genome Announc.">
        <title>Genome sequence of the AIDS-associated pathogen Penicillium marneffei (ATCC18224) and its near taxonomic relative Talaromyces stipitatus (ATCC10500).</title>
        <authorList>
            <person name="Nierman W.C."/>
            <person name="Fedorova-Abrams N.D."/>
            <person name="Andrianopoulos A."/>
        </authorList>
    </citation>
    <scope>NUCLEOTIDE SEQUENCE [LARGE SCALE GENOMIC DNA]</scope>
    <source>
        <strain>ATCC 18224 / CBS 334.59 / QM 7333</strain>
    </source>
</reference>
<gene>
    <name type="primary">fen1</name>
    <name type="ORF">PMAA_004310</name>
</gene>
<organism>
    <name type="scientific">Talaromyces marneffei (strain ATCC 18224 / CBS 334.59 / QM 7333)</name>
    <name type="common">Penicillium marneffei</name>
    <dbReference type="NCBI Taxonomy" id="441960"/>
    <lineage>
        <taxon>Eukaryota</taxon>
        <taxon>Fungi</taxon>
        <taxon>Dikarya</taxon>
        <taxon>Ascomycota</taxon>
        <taxon>Pezizomycotina</taxon>
        <taxon>Eurotiomycetes</taxon>
        <taxon>Eurotiomycetidae</taxon>
        <taxon>Eurotiales</taxon>
        <taxon>Trichocomaceae</taxon>
        <taxon>Talaromyces</taxon>
        <taxon>Talaromyces sect. Talaromyces</taxon>
    </lineage>
</organism>
<accession>B6QT52</accession>
<name>FEN1_TALMQ</name>
<proteinExistence type="inferred from homology"/>
<keyword id="KW-0227">DNA damage</keyword>
<keyword id="KW-0234">DNA repair</keyword>
<keyword id="KW-0235">DNA replication</keyword>
<keyword id="KW-0255">Endonuclease</keyword>
<keyword id="KW-0269">Exonuclease</keyword>
<keyword id="KW-0378">Hydrolase</keyword>
<keyword id="KW-0460">Magnesium</keyword>
<keyword id="KW-0479">Metal-binding</keyword>
<keyword id="KW-0496">Mitochondrion</keyword>
<keyword id="KW-0540">Nuclease</keyword>
<keyword id="KW-0539">Nucleus</keyword>
<keyword id="KW-0597">Phosphoprotein</keyword>
<keyword id="KW-1185">Reference proteome</keyword>
<protein>
    <recommendedName>
        <fullName evidence="1">Flap endonuclease 1</fullName>
        <shortName evidence="1">FEN-1</shortName>
        <ecNumber evidence="1">3.1.-.-</ecNumber>
    </recommendedName>
    <alternativeName>
        <fullName evidence="1">Flap structure-specific endonuclease 1</fullName>
    </alternativeName>
</protein>
<sequence>MGIKHLYQVISENAPDAVKTGEIKNHFGRKVAIDASMSIYSFLIAVRSDGQQLMSEAGETTSHLMGMFYRTLRIVDNGIKPLYVFDGAPPKMKGGELAKRSARKREAHEAHEEAKETGTAEDMEKFSRRTVRVTREHNEECKKLLKLMGVPYIDAPTEAEAQCAVLARAGKVYAAASEDMDTLCFEAPILLRHLTFSEQRKEPILEIHLDKALEGLGMDMAQFIDLCILLGCDYLEPIPKVGPNTALKLIREHGSLEKVVEAIENDPKKKYVIPDDWPYQEARELFFNPDVRKADDPQCDFKWESPDVEGLVKFLVTDKGFSEDRVRNGAARLAKNLKTAQQSRLEGFFKPVAKTDAEKASMKRKHDEKIEEQKKRKKEDAKAKKEAKARPRGAV</sequence>
<comment type="function">
    <text evidence="1">Structure-specific nuclease with 5'-flap endonuclease and 5'-3' exonuclease activities involved in DNA replication and repair. During DNA replication, cleaves the 5'-overhanging flap structure that is generated by displacement synthesis when DNA polymerase encounters the 5'-end of a downstream Okazaki fragment. It enters the flap from the 5'-end and then tracks to cleave the flap base, leaving a nick for ligation. Also involved in the long patch base excision repair (LP-BER) pathway, by cleaving within the apurinic/apyrimidinic (AP) site-terminated flap. Acts as a genome stabilization factor that prevents flaps from equilibrating into structures that lead to duplications and deletions. Also possesses 5'-3' exonuclease activity on nicked or gapped double-stranded DNA, and exhibits RNase H activity. Also involved in replication and repair of rDNA and in repairing mitochondrial DNA.</text>
</comment>
<comment type="cofactor">
    <cofactor evidence="1">
        <name>Mg(2+)</name>
        <dbReference type="ChEBI" id="CHEBI:18420"/>
    </cofactor>
    <text evidence="1">Binds 2 magnesium ions per subunit. They probably participate in the reaction catalyzed by the enzyme. May bind an additional third magnesium ion after substrate binding.</text>
</comment>
<comment type="subunit">
    <text evidence="1">Interacts with PCNA. Three molecules of fen1 bind to one PCNA trimer with each molecule binding to one PCNA monomer. PCNA stimulates the nuclease activity without altering cleavage specificity.</text>
</comment>
<comment type="subcellular location">
    <subcellularLocation>
        <location evidence="1">Nucleus</location>
        <location evidence="1">Nucleolus</location>
    </subcellularLocation>
    <subcellularLocation>
        <location evidence="1">Nucleus</location>
        <location evidence="1">Nucleoplasm</location>
    </subcellularLocation>
    <subcellularLocation>
        <location evidence="1">Mitochondrion</location>
    </subcellularLocation>
    <text evidence="1">Resides mostly in the nucleoli and relocalizes to the nucleoplasm upon DNA damage.</text>
</comment>
<comment type="PTM">
    <text evidence="1">Phosphorylated. Phosphorylation upon DNA damage induces relocalization to the nuclear plasma.</text>
</comment>
<comment type="similarity">
    <text evidence="1">Belongs to the XPG/RAD2 endonuclease family. FEN1 subfamily.</text>
</comment>
<comment type="sequence caution" evidence="3">
    <conflict type="erroneous gene model prediction">
        <sequence resource="EMBL-CDS" id="EEA19652"/>
    </conflict>
</comment>